<gene>
    <name type="primary">Klhl41</name>
    <name type="synonym">Kbtbd10</name>
</gene>
<proteinExistence type="evidence at protein level"/>
<comment type="function">
    <text evidence="4 5 6">Involved in skeletal muscle development and differentiation. Regulates proliferation and differentiation of myoblasts and plays a role in myofibril assembly by promoting lateral fusion of adjacent thin fibrils into mature, wide myofibrils. Required for pseudopod elongation in transformed cells.</text>
</comment>
<comment type="subunit">
    <text evidence="1 2">Interacts with NRAP. Part of a complex that contains CUL3, RBX1 and KLHL41. Interacts with LASP1.</text>
</comment>
<comment type="subcellular location">
    <subcellularLocation>
        <location evidence="4 6">Cytoplasm</location>
    </subcellularLocation>
    <subcellularLocation>
        <location evidence="4">Cytoplasm</location>
        <location evidence="4">Cytoskeleton</location>
    </subcellularLocation>
    <subcellularLocation>
        <location evidence="2">Cell projection</location>
        <location evidence="2">Pseudopodium</location>
    </subcellularLocation>
    <subcellularLocation>
        <location evidence="2">Cell projection</location>
        <location evidence="2">Ruffle</location>
    </subcellularLocation>
    <subcellularLocation>
        <location evidence="6">Cytoplasm</location>
        <location evidence="6">Myofibril</location>
        <location evidence="6">Sarcomere</location>
        <location evidence="6">M line</location>
    </subcellularLocation>
    <subcellularLocation>
        <location evidence="7">Sarcoplasmic reticulum membrane</location>
    </subcellularLocation>
    <subcellularLocation>
        <location evidence="7">Endoplasmic reticulum membrane</location>
    </subcellularLocation>
    <text>Predominantly cytoplasmic but can colocalize with F-actin at the membrane ruffle-like structures at the tips of transformation-specific pseudopodia.</text>
</comment>
<comment type="tissue specificity">
    <text evidence="4 6">Skeletal muscle. Localized between laterally fusing myofibrils in skeletal muscle (at protein level). Expressed at a lower level in the heart compared to skeletal muscle.</text>
</comment>
<comment type="developmental stage">
    <text evidence="6">Expressed in the myotome part of the mature somites in embryos from embryonic day 9.5 onwards. It is not expressed in the developing heart at these embryonic stages.</text>
</comment>
<comment type="PTM">
    <text evidence="1">Ubiquitinated by E3 ubiquitin ligase complex formed by CUL3 and RBX1 and probably targeted for proteasome-independent degradation. Quinone-induced oxidative stress increases its ubiquitination.</text>
</comment>
<keyword id="KW-0966">Cell projection</keyword>
<keyword id="KW-0963">Cytoplasm</keyword>
<keyword id="KW-0206">Cytoskeleton</keyword>
<keyword id="KW-0256">Endoplasmic reticulum</keyword>
<keyword id="KW-0880">Kelch repeat</keyword>
<keyword id="KW-0472">Membrane</keyword>
<keyword id="KW-0597">Phosphoprotein</keyword>
<keyword id="KW-1185">Reference proteome</keyword>
<keyword id="KW-0677">Repeat</keyword>
<keyword id="KW-0703">Sarcoplasmic reticulum</keyword>
<keyword id="KW-0832">Ubl conjugation</keyword>
<evidence type="ECO:0000250" key="1">
    <source>
        <dbReference type="UniProtKB" id="O60662"/>
    </source>
</evidence>
<evidence type="ECO:0000250" key="2">
    <source>
        <dbReference type="UniProtKB" id="Q9ER30"/>
    </source>
</evidence>
<evidence type="ECO:0000255" key="3">
    <source>
        <dbReference type="PROSITE-ProRule" id="PRU00037"/>
    </source>
</evidence>
<evidence type="ECO:0000269" key="4">
    <source>
    </source>
</evidence>
<evidence type="ECO:0000269" key="5">
    <source>
    </source>
</evidence>
<evidence type="ECO:0000269" key="6">
    <source>
    </source>
</evidence>
<evidence type="ECO:0000269" key="7">
    <source>
    </source>
</evidence>
<evidence type="ECO:0000305" key="8"/>
<organism>
    <name type="scientific">Mus musculus</name>
    <name type="common">Mouse</name>
    <dbReference type="NCBI Taxonomy" id="10090"/>
    <lineage>
        <taxon>Eukaryota</taxon>
        <taxon>Metazoa</taxon>
        <taxon>Chordata</taxon>
        <taxon>Craniata</taxon>
        <taxon>Vertebrata</taxon>
        <taxon>Euteleostomi</taxon>
        <taxon>Mammalia</taxon>
        <taxon>Eutheria</taxon>
        <taxon>Euarchontoglires</taxon>
        <taxon>Glires</taxon>
        <taxon>Rodentia</taxon>
        <taxon>Myomorpha</taxon>
        <taxon>Muroidea</taxon>
        <taxon>Muridae</taxon>
        <taxon>Murinae</taxon>
        <taxon>Mus</taxon>
        <taxon>Mus</taxon>
    </lineage>
</organism>
<accession>A2AUC9</accession>
<accession>B2RWT7</accession>
<feature type="chain" id="PRO_0000421252" description="Kelch-like protein 41">
    <location>
        <begin position="1"/>
        <end position="606"/>
    </location>
</feature>
<feature type="domain" description="BTB" evidence="3">
    <location>
        <begin position="33"/>
        <end position="100"/>
    </location>
</feature>
<feature type="domain" description="BACK">
    <location>
        <begin position="135"/>
        <end position="237"/>
    </location>
</feature>
<feature type="repeat" description="Kelch 1">
    <location>
        <begin position="346"/>
        <end position="398"/>
    </location>
</feature>
<feature type="repeat" description="Kelch 2">
    <location>
        <begin position="399"/>
        <end position="447"/>
    </location>
</feature>
<feature type="repeat" description="Kelch 3">
    <location>
        <begin position="448"/>
        <end position="495"/>
    </location>
</feature>
<feature type="repeat" description="Kelch 4">
    <location>
        <begin position="497"/>
        <end position="542"/>
    </location>
</feature>
<feature type="repeat" description="Kelch 5">
    <location>
        <begin position="544"/>
        <end position="599"/>
    </location>
</feature>
<feature type="modified residue" description="Phosphoserine" evidence="2">
    <location>
        <position position="3"/>
    </location>
</feature>
<feature type="sequence conflict" description="In Ref. 3; AAI50699." evidence="8" ref="3">
    <original>A</original>
    <variation>S</variation>
    <location>
        <position position="404"/>
    </location>
</feature>
<protein>
    <recommendedName>
        <fullName>Kelch-like protein 41</fullName>
    </recommendedName>
    <alternativeName>
        <fullName>Kelch repeat and BTB domain-containing protein 10</fullName>
    </alternativeName>
</protein>
<sequence length="606" mass="68190">MDSQRELAEELRLYQSTLLQDGLKDLLEEKKFIDCTLKAGDKSFPCHRLILSACSPYFREYFLSEIEEEKKKEVALDNVDPAILDLIIKYLYSASIDLNDGNVQDIFALSSRFQIPSVFTVCVSYLQKRLAPGNCLAILRLGLLLDCPRLAISAREFVSDRFVQICKEEDFMQLSPQELISVISNDSLNVEKEEVVFEAVMKWVRTDKENRAKNLSEVFDCIRFRLMAEKYFKDHVEKDDIIKSNPEVQKKIKVLKDAFAGKLPEPSKNAEKAGAGEVNGDVGDEDLLPGYLNDIPRHGMFVKDLILLVNDTAAVAYDPMENECYLTALAEQIPRNHSSLVTQQNQVYVVGGLYVDEENKDQPLQSYFFQLDNVTSEWVGLPPLPSARCLFGLGEVDDKIYVVAGKDLQTEASLDSVLCYDPVAAKWSEVKNLPIKVYGHNVISHNGMIYCLGGKTDDKKCTNRVFIYNPKKGDWKDLAPMKTPRSMFGVAIHKGKIVIAGGVTEDGLSASVEAFDLKTNKWEVMTEFPQERSSISLVSLAGALYAIGGFAMIQLESKEFAPTEVNDIWKYEDDKKEWAGMLKEIRYASGASCLATRLNLFKLSKL</sequence>
<reference key="1">
    <citation type="journal article" date="2009" name="PLoS Biol.">
        <title>Lineage-specific biology revealed by a finished genome assembly of the mouse.</title>
        <authorList>
            <person name="Church D.M."/>
            <person name="Goodstadt L."/>
            <person name="Hillier L.W."/>
            <person name="Zody M.C."/>
            <person name="Goldstein S."/>
            <person name="She X."/>
            <person name="Bult C.J."/>
            <person name="Agarwala R."/>
            <person name="Cherry J.L."/>
            <person name="DiCuccio M."/>
            <person name="Hlavina W."/>
            <person name="Kapustin Y."/>
            <person name="Meric P."/>
            <person name="Maglott D."/>
            <person name="Birtle Z."/>
            <person name="Marques A.C."/>
            <person name="Graves T."/>
            <person name="Zhou S."/>
            <person name="Teague B."/>
            <person name="Potamousis K."/>
            <person name="Churas C."/>
            <person name="Place M."/>
            <person name="Herschleb J."/>
            <person name="Runnheim R."/>
            <person name="Forrest D."/>
            <person name="Amos-Landgraf J."/>
            <person name="Schwartz D.C."/>
            <person name="Cheng Z."/>
            <person name="Lindblad-Toh K."/>
            <person name="Eichler E.E."/>
            <person name="Ponting C.P."/>
        </authorList>
    </citation>
    <scope>NUCLEOTIDE SEQUENCE [LARGE SCALE GENOMIC DNA]</scope>
    <source>
        <strain>C57BL/6J</strain>
    </source>
</reference>
<reference key="2">
    <citation type="submission" date="2005-07" db="EMBL/GenBank/DDBJ databases">
        <authorList>
            <person name="Mural R.J."/>
            <person name="Adams M.D."/>
            <person name="Myers E.W."/>
            <person name="Smith H.O."/>
            <person name="Venter J.C."/>
        </authorList>
    </citation>
    <scope>NUCLEOTIDE SEQUENCE [LARGE SCALE GENOMIC DNA]</scope>
</reference>
<reference key="3">
    <citation type="journal article" date="2004" name="Genome Res.">
        <title>The status, quality, and expansion of the NIH full-length cDNA project: the Mammalian Gene Collection (MGC).</title>
        <authorList>
            <consortium name="The MGC Project Team"/>
        </authorList>
    </citation>
    <scope>NUCLEOTIDE SEQUENCE [LARGE SCALE MRNA]</scope>
</reference>
<reference key="4">
    <citation type="journal article" date="2008" name="Exp. Cell Res.">
        <title>Krp1 (Sarcosin) promotes lateral fusion of myofibril assembly intermediates in cultured mouse cardiomyocytes.</title>
        <authorList>
            <person name="Greenberg C.C."/>
            <person name="Connelly P.S."/>
            <person name="Daniels M.P."/>
            <person name="Horowits R."/>
        </authorList>
    </citation>
    <scope>FUNCTION</scope>
    <scope>SUBCELLULAR LOCATION</scope>
    <scope>TISSUE SPECIFICITY</scope>
</reference>
<reference key="5">
    <citation type="journal article" date="2010" name="Cell">
        <title>A tissue-specific atlas of mouse protein phosphorylation and expression.</title>
        <authorList>
            <person name="Huttlin E.L."/>
            <person name="Jedrychowski M.P."/>
            <person name="Elias J.E."/>
            <person name="Goswami T."/>
            <person name="Rad R."/>
            <person name="Beausoleil S.A."/>
            <person name="Villen J."/>
            <person name="Haas W."/>
            <person name="Sowa M.E."/>
            <person name="Gygi S.P."/>
        </authorList>
    </citation>
    <scope>IDENTIFICATION BY MASS SPECTROMETRY [LARGE SCALE ANALYSIS]</scope>
    <source>
        <tissue>Heart</tissue>
    </source>
</reference>
<reference key="6">
    <citation type="journal article" date="2011" name="Am. J. Physiol.">
        <title>BTB-Kelch protein Krp1 regulates proliferation and differentiation of myoblasts.</title>
        <authorList>
            <person name="Paxton C.W."/>
            <person name="Cosgrove R.A."/>
            <person name="Drozd A.C."/>
            <person name="Wiggins E.L."/>
            <person name="Woodhouse S."/>
            <person name="Watson R.A."/>
            <person name="Spence H.J."/>
            <person name="Ozanne B.W."/>
            <person name="Pell J.M."/>
        </authorList>
    </citation>
    <scope>FUNCTION</scope>
    <scope>SUBCELLULAR LOCATION</scope>
</reference>
<reference key="7">
    <citation type="journal article" date="2012" name="Int. J. Dev. Biol.">
        <title>Sarcosin (Krp1) in skeletal muscle differentiation: gene expression profiling and knockdown experiments.</title>
        <authorList>
            <person name="du Puy L."/>
            <person name="Beqqali A."/>
            <person name="van Tol H.T."/>
            <person name="Monshouwer-Kloots J."/>
            <person name="Passier R."/>
            <person name="Haagsman H.P."/>
            <person name="Roelen B.A."/>
        </authorList>
    </citation>
    <scope>FUNCTION</scope>
    <scope>SUBCELLULAR LOCATION</scope>
    <scope>TISSUE SPECIFICITY</scope>
    <scope>DEVELOPMENTAL STAGE</scope>
</reference>
<reference key="8">
    <citation type="journal article" date="2013" name="Am. J. Hum. Genet.">
        <title>Identification of KLHL41 mutations implicates BTB-Kelch-mediated ubiquitination as an alternate pathway to myofibrillar disruption in nemaline myopathy.</title>
        <authorList>
            <person name="Gupta V.A."/>
            <person name="Ravenscroft G."/>
            <person name="Shaheen R."/>
            <person name="Todd E.J."/>
            <person name="Swanson L.C."/>
            <person name="Shiina M."/>
            <person name="Ogata K."/>
            <person name="Hsu C."/>
            <person name="Clarke N.F."/>
            <person name="Darras B.T."/>
            <person name="Farrar M.A."/>
            <person name="Hashem A."/>
            <person name="Manton N.D."/>
            <person name="Muntoni F."/>
            <person name="North K.N."/>
            <person name="Sandaradura S.A."/>
            <person name="Nishino I."/>
            <person name="Hayashi Y.K."/>
            <person name="Sewry C.A."/>
            <person name="Thompson E.M."/>
            <person name="Yau K.S."/>
            <person name="Brownstein C.A."/>
            <person name="Yu T.W."/>
            <person name="Allcock R.J."/>
            <person name="Davis M.R."/>
            <person name="Wallgren-Pettersson C."/>
            <person name="Matsumoto N."/>
            <person name="Alkuraya F.S."/>
            <person name="Laing N.G."/>
            <person name="Beggs A.H."/>
        </authorList>
    </citation>
    <scope>SUBCELLULAR LOCATION</scope>
</reference>
<name>KLH41_MOUSE</name>
<dbReference type="EMBL" id="AL929083">
    <property type="status" value="NOT_ANNOTATED_CDS"/>
    <property type="molecule type" value="Genomic_DNA"/>
</dbReference>
<dbReference type="EMBL" id="CH466519">
    <property type="protein sequence ID" value="EDL27039.1"/>
    <property type="molecule type" value="Genomic_DNA"/>
</dbReference>
<dbReference type="EMBL" id="BC150698">
    <property type="protein sequence ID" value="AAI50699.1"/>
    <property type="molecule type" value="mRNA"/>
</dbReference>
<dbReference type="CCDS" id="CCDS38136.1"/>
<dbReference type="RefSeq" id="NP_001074556.1">
    <property type="nucleotide sequence ID" value="NM_001081087.1"/>
</dbReference>
<dbReference type="SMR" id="A2AUC9"/>
<dbReference type="BioGRID" id="230702">
    <property type="interactions" value="7"/>
</dbReference>
<dbReference type="CORUM" id="A2AUC9"/>
<dbReference type="FunCoup" id="A2AUC9">
    <property type="interactions" value="69"/>
</dbReference>
<dbReference type="STRING" id="10090.ENSMUSP00000097627"/>
<dbReference type="iPTMnet" id="A2AUC9"/>
<dbReference type="PhosphoSitePlus" id="A2AUC9"/>
<dbReference type="jPOST" id="A2AUC9"/>
<dbReference type="PaxDb" id="10090-ENSMUSP00000097627"/>
<dbReference type="PeptideAtlas" id="A2AUC9"/>
<dbReference type="ProteomicsDB" id="263630"/>
<dbReference type="Antibodypedia" id="35006">
    <property type="antibodies" value="202 antibodies from 26 providers"/>
</dbReference>
<dbReference type="Ensembl" id="ENSMUST00000100050.4">
    <property type="protein sequence ID" value="ENSMUSP00000097627.4"/>
    <property type="gene ID" value="ENSMUSG00000075307.4"/>
</dbReference>
<dbReference type="GeneID" id="228003"/>
<dbReference type="KEGG" id="mmu:228003"/>
<dbReference type="UCSC" id="uc008jyg.1">
    <property type="organism name" value="mouse"/>
</dbReference>
<dbReference type="AGR" id="MGI:2683854"/>
<dbReference type="CTD" id="10324"/>
<dbReference type="MGI" id="MGI:2683854">
    <property type="gene designation" value="Klhl41"/>
</dbReference>
<dbReference type="VEuPathDB" id="HostDB:ENSMUSG00000075307"/>
<dbReference type="eggNOG" id="KOG4441">
    <property type="taxonomic scope" value="Eukaryota"/>
</dbReference>
<dbReference type="GeneTree" id="ENSGT00940000158859"/>
<dbReference type="HOGENOM" id="CLU_004253_14_4_1"/>
<dbReference type="InParanoid" id="A2AUC9"/>
<dbReference type="OMA" id="FQSYFFQ"/>
<dbReference type="OrthoDB" id="6359816at2759"/>
<dbReference type="PhylomeDB" id="A2AUC9"/>
<dbReference type="TreeFam" id="TF351653"/>
<dbReference type="Reactome" id="R-MMU-8951664">
    <property type="pathway name" value="Neddylation"/>
</dbReference>
<dbReference type="Reactome" id="R-MMU-983168">
    <property type="pathway name" value="Antigen processing: Ubiquitination &amp; Proteasome degradation"/>
</dbReference>
<dbReference type="BioGRID-ORCS" id="228003">
    <property type="hits" value="2 hits in 78 CRISPR screens"/>
</dbReference>
<dbReference type="PRO" id="PR:A2AUC9"/>
<dbReference type="Proteomes" id="UP000000589">
    <property type="component" value="Chromosome 2"/>
</dbReference>
<dbReference type="RNAct" id="A2AUC9">
    <property type="molecule type" value="protein"/>
</dbReference>
<dbReference type="Bgee" id="ENSMUSG00000075307">
    <property type="expression patterns" value="Expressed in knee joint and 83 other cell types or tissues"/>
</dbReference>
<dbReference type="GO" id="GO:0031463">
    <property type="term" value="C:Cul3-RING ubiquitin ligase complex"/>
    <property type="evidence" value="ECO:0007669"/>
    <property type="project" value="Ensembl"/>
</dbReference>
<dbReference type="GO" id="GO:0005737">
    <property type="term" value="C:cytoplasm"/>
    <property type="evidence" value="ECO:0000314"/>
    <property type="project" value="UniProtKB"/>
</dbReference>
<dbReference type="GO" id="GO:0005856">
    <property type="term" value="C:cytoskeleton"/>
    <property type="evidence" value="ECO:0000314"/>
    <property type="project" value="UniProtKB"/>
</dbReference>
<dbReference type="GO" id="GO:0005829">
    <property type="term" value="C:cytosol"/>
    <property type="evidence" value="ECO:0007669"/>
    <property type="project" value="Ensembl"/>
</dbReference>
<dbReference type="GO" id="GO:0005789">
    <property type="term" value="C:endoplasmic reticulum membrane"/>
    <property type="evidence" value="ECO:0000314"/>
    <property type="project" value="UniProtKB"/>
</dbReference>
<dbReference type="GO" id="GO:0031430">
    <property type="term" value="C:M band"/>
    <property type="evidence" value="ECO:0000314"/>
    <property type="project" value="UniProtKB"/>
</dbReference>
<dbReference type="GO" id="GO:0005654">
    <property type="term" value="C:nucleoplasm"/>
    <property type="evidence" value="ECO:0007669"/>
    <property type="project" value="Ensembl"/>
</dbReference>
<dbReference type="GO" id="GO:0005886">
    <property type="term" value="C:plasma membrane"/>
    <property type="evidence" value="ECO:0007669"/>
    <property type="project" value="Ensembl"/>
</dbReference>
<dbReference type="GO" id="GO:0031143">
    <property type="term" value="C:pseudopodium"/>
    <property type="evidence" value="ECO:0007669"/>
    <property type="project" value="UniProtKB-SubCell"/>
</dbReference>
<dbReference type="GO" id="GO:0001726">
    <property type="term" value="C:ruffle"/>
    <property type="evidence" value="ECO:0007669"/>
    <property type="project" value="UniProtKB-SubCell"/>
</dbReference>
<dbReference type="GO" id="GO:0033017">
    <property type="term" value="C:sarcoplasmic reticulum membrane"/>
    <property type="evidence" value="ECO:0000314"/>
    <property type="project" value="UniProtKB"/>
</dbReference>
<dbReference type="GO" id="GO:0030239">
    <property type="term" value="P:myofibril assembly"/>
    <property type="evidence" value="ECO:0000315"/>
    <property type="project" value="UniProtKB"/>
</dbReference>
<dbReference type="GO" id="GO:0016567">
    <property type="term" value="P:protein ubiquitination"/>
    <property type="evidence" value="ECO:0007669"/>
    <property type="project" value="Ensembl"/>
</dbReference>
<dbReference type="GO" id="GO:0045661">
    <property type="term" value="P:regulation of myoblast differentiation"/>
    <property type="evidence" value="ECO:0000315"/>
    <property type="project" value="UniProtKB"/>
</dbReference>
<dbReference type="GO" id="GO:2000291">
    <property type="term" value="P:regulation of myoblast proliferation"/>
    <property type="evidence" value="ECO:0000315"/>
    <property type="project" value="UniProtKB"/>
</dbReference>
<dbReference type="GO" id="GO:2001014">
    <property type="term" value="P:regulation of skeletal muscle cell differentiation"/>
    <property type="evidence" value="ECO:0000315"/>
    <property type="project" value="MGI"/>
</dbReference>
<dbReference type="GO" id="GO:0035914">
    <property type="term" value="P:skeletal muscle cell differentiation"/>
    <property type="evidence" value="ECO:0000314"/>
    <property type="project" value="UniProtKB"/>
</dbReference>
<dbReference type="CDD" id="cd18341">
    <property type="entry name" value="BTB_POZ_KLHL41_KBTBD10"/>
    <property type="match status" value="1"/>
</dbReference>
<dbReference type="FunFam" id="3.30.710.10:FF:000006">
    <property type="entry name" value="Kelch repeat and BTB domain-containing 6"/>
    <property type="match status" value="1"/>
</dbReference>
<dbReference type="FunFam" id="1.25.40.420:FF:000001">
    <property type="entry name" value="Kelch-like family member 12"/>
    <property type="match status" value="1"/>
</dbReference>
<dbReference type="FunFam" id="2.120.10.80:FF:000025">
    <property type="entry name" value="Kelch-like family member 41"/>
    <property type="match status" value="1"/>
</dbReference>
<dbReference type="Gene3D" id="1.25.40.420">
    <property type="match status" value="1"/>
</dbReference>
<dbReference type="Gene3D" id="2.120.10.80">
    <property type="entry name" value="Kelch-type beta propeller"/>
    <property type="match status" value="1"/>
</dbReference>
<dbReference type="Gene3D" id="3.30.710.10">
    <property type="entry name" value="Potassium Channel Kv1.1, Chain A"/>
    <property type="match status" value="1"/>
</dbReference>
<dbReference type="InterPro" id="IPR011705">
    <property type="entry name" value="BACK"/>
</dbReference>
<dbReference type="InterPro" id="IPR017096">
    <property type="entry name" value="BTB-kelch_protein"/>
</dbReference>
<dbReference type="InterPro" id="IPR000210">
    <property type="entry name" value="BTB/POZ_dom"/>
</dbReference>
<dbReference type="InterPro" id="IPR015915">
    <property type="entry name" value="Kelch-typ_b-propeller"/>
</dbReference>
<dbReference type="InterPro" id="IPR006652">
    <property type="entry name" value="Kelch_1"/>
</dbReference>
<dbReference type="InterPro" id="IPR030571">
    <property type="entry name" value="KLHL41_KL41B_BTB_POZ_dom"/>
</dbReference>
<dbReference type="InterPro" id="IPR011333">
    <property type="entry name" value="SKP1/BTB/POZ_sf"/>
</dbReference>
<dbReference type="PANTHER" id="PTHR24412">
    <property type="entry name" value="KELCH PROTEIN"/>
    <property type="match status" value="1"/>
</dbReference>
<dbReference type="PANTHER" id="PTHR24412:SF146">
    <property type="entry name" value="KELCH-LIKE PROTEIN 41"/>
    <property type="match status" value="1"/>
</dbReference>
<dbReference type="Pfam" id="PF07707">
    <property type="entry name" value="BACK"/>
    <property type="match status" value="1"/>
</dbReference>
<dbReference type="Pfam" id="PF00651">
    <property type="entry name" value="BTB"/>
    <property type="match status" value="1"/>
</dbReference>
<dbReference type="Pfam" id="PF24681">
    <property type="entry name" value="Kelch_KLHDC2_KLHL20_DRC7"/>
    <property type="match status" value="1"/>
</dbReference>
<dbReference type="PIRSF" id="PIRSF037037">
    <property type="entry name" value="Kelch-like_protein_gigaxonin"/>
    <property type="match status" value="1"/>
</dbReference>
<dbReference type="SMART" id="SM00875">
    <property type="entry name" value="BACK"/>
    <property type="match status" value="1"/>
</dbReference>
<dbReference type="SMART" id="SM00225">
    <property type="entry name" value="BTB"/>
    <property type="match status" value="1"/>
</dbReference>
<dbReference type="SMART" id="SM00612">
    <property type="entry name" value="Kelch"/>
    <property type="match status" value="4"/>
</dbReference>
<dbReference type="SUPFAM" id="SSF117281">
    <property type="entry name" value="Kelch motif"/>
    <property type="match status" value="1"/>
</dbReference>
<dbReference type="SUPFAM" id="SSF54695">
    <property type="entry name" value="POZ domain"/>
    <property type="match status" value="1"/>
</dbReference>
<dbReference type="PROSITE" id="PS50097">
    <property type="entry name" value="BTB"/>
    <property type="match status" value="1"/>
</dbReference>